<comment type="function">
    <text evidence="1">Involved in gross chromosomal rearrangements (GCRs) and telomere healing.</text>
</comment>
<comment type="similarity">
    <text evidence="2">Belongs to the IRC6 family.</text>
</comment>
<organism>
    <name type="scientific">Kluyveromyces lactis (strain ATCC 8585 / CBS 2359 / DSM 70799 / NBRC 1267 / NRRL Y-1140 / WM37)</name>
    <name type="common">Yeast</name>
    <name type="synonym">Candida sphaerica</name>
    <dbReference type="NCBI Taxonomy" id="284590"/>
    <lineage>
        <taxon>Eukaryota</taxon>
        <taxon>Fungi</taxon>
        <taxon>Dikarya</taxon>
        <taxon>Ascomycota</taxon>
        <taxon>Saccharomycotina</taxon>
        <taxon>Saccharomycetes</taxon>
        <taxon>Saccharomycetales</taxon>
        <taxon>Saccharomycetaceae</taxon>
        <taxon>Kluyveromyces</taxon>
    </lineage>
</organism>
<protein>
    <recommendedName>
        <fullName>Increased recombination centers protein 6</fullName>
    </recommendedName>
</protein>
<gene>
    <name type="primary">IRC6</name>
    <name type="ordered locus">KLLA0A01089g</name>
</gene>
<feature type="chain" id="PRO_0000399222" description="Increased recombination centers protein 6">
    <location>
        <begin position="1"/>
        <end position="233"/>
    </location>
</feature>
<keyword id="KW-0160">Chromosomal rearrangement</keyword>
<keyword id="KW-1185">Reference proteome</keyword>
<sequence length="233" mass="27635">MDNHKVLILLPESLEIQEHIAFISTIFQKQYDETESIARDVQWKTKYYETTLDLYIDTYDVLQEWVNDFVSDECKELRDVISGIIFVFKDEDHKPPVECLKNLIDERIEDFTAKFFIGCYFNENVIEEDELYELNSDLLVQNFEIVNWFDKPDPSMDKVGSERIKEIIDVHPWLSHPETLKKNQGQINISPIDLDSFMTKLEQAKERYQTFDDSKEAELFIEKIIDELSDMIV</sequence>
<name>IRC6_KLULA</name>
<accession>Q6CYE2</accession>
<evidence type="ECO:0000250" key="1"/>
<evidence type="ECO:0000305" key="2"/>
<dbReference type="EMBL" id="CR382121">
    <property type="protein sequence ID" value="CAH02635.1"/>
    <property type="molecule type" value="Genomic_DNA"/>
</dbReference>
<dbReference type="RefSeq" id="XP_451047.1">
    <property type="nucleotide sequence ID" value="XM_451047.1"/>
</dbReference>
<dbReference type="SMR" id="Q6CYE2"/>
<dbReference type="FunCoup" id="Q6CYE2">
    <property type="interactions" value="29"/>
</dbReference>
<dbReference type="STRING" id="284590.Q6CYE2"/>
<dbReference type="PaxDb" id="284590-Q6CYE2"/>
<dbReference type="KEGG" id="kla:KLLA0_A01089g"/>
<dbReference type="eggNOG" id="ENOG502S7AE">
    <property type="taxonomic scope" value="Eukaryota"/>
</dbReference>
<dbReference type="HOGENOM" id="CLU_079666_0_0_1"/>
<dbReference type="InParanoid" id="Q6CYE2"/>
<dbReference type="OMA" id="GMESACT"/>
<dbReference type="Proteomes" id="UP000000598">
    <property type="component" value="Chromosome A"/>
</dbReference>
<dbReference type="GO" id="GO:0030674">
    <property type="term" value="F:protein-macromolecule adaptor activity"/>
    <property type="evidence" value="ECO:0007669"/>
    <property type="project" value="TreeGrafter"/>
</dbReference>
<dbReference type="GO" id="GO:0016192">
    <property type="term" value="P:vesicle-mediated transport"/>
    <property type="evidence" value="ECO:0007669"/>
    <property type="project" value="InterPro"/>
</dbReference>
<dbReference type="Gene3D" id="3.40.50.11960">
    <property type="match status" value="1"/>
</dbReference>
<dbReference type="InterPro" id="IPR034627">
    <property type="entry name" value="Irc6"/>
</dbReference>
<dbReference type="PANTHER" id="PTHR28043">
    <property type="entry name" value="INCREASED RECOMBINATION CENTERS PROTEIN 6"/>
    <property type="match status" value="1"/>
</dbReference>
<dbReference type="PANTHER" id="PTHR28043:SF1">
    <property type="entry name" value="INCREASED RECOMBINATION CENTERS PROTEIN 6"/>
    <property type="match status" value="1"/>
</dbReference>
<dbReference type="Pfam" id="PF10199">
    <property type="entry name" value="Adaptin_binding"/>
    <property type="match status" value="1"/>
</dbReference>
<reference key="1">
    <citation type="journal article" date="2004" name="Nature">
        <title>Genome evolution in yeasts.</title>
        <authorList>
            <person name="Dujon B."/>
            <person name="Sherman D."/>
            <person name="Fischer G."/>
            <person name="Durrens P."/>
            <person name="Casaregola S."/>
            <person name="Lafontaine I."/>
            <person name="de Montigny J."/>
            <person name="Marck C."/>
            <person name="Neuveglise C."/>
            <person name="Talla E."/>
            <person name="Goffard N."/>
            <person name="Frangeul L."/>
            <person name="Aigle M."/>
            <person name="Anthouard V."/>
            <person name="Babour A."/>
            <person name="Barbe V."/>
            <person name="Barnay S."/>
            <person name="Blanchin S."/>
            <person name="Beckerich J.-M."/>
            <person name="Beyne E."/>
            <person name="Bleykasten C."/>
            <person name="Boisrame A."/>
            <person name="Boyer J."/>
            <person name="Cattolico L."/>
            <person name="Confanioleri F."/>
            <person name="de Daruvar A."/>
            <person name="Despons L."/>
            <person name="Fabre E."/>
            <person name="Fairhead C."/>
            <person name="Ferry-Dumazet H."/>
            <person name="Groppi A."/>
            <person name="Hantraye F."/>
            <person name="Hennequin C."/>
            <person name="Jauniaux N."/>
            <person name="Joyet P."/>
            <person name="Kachouri R."/>
            <person name="Kerrest A."/>
            <person name="Koszul R."/>
            <person name="Lemaire M."/>
            <person name="Lesur I."/>
            <person name="Ma L."/>
            <person name="Muller H."/>
            <person name="Nicaud J.-M."/>
            <person name="Nikolski M."/>
            <person name="Oztas S."/>
            <person name="Ozier-Kalogeropoulos O."/>
            <person name="Pellenz S."/>
            <person name="Potier S."/>
            <person name="Richard G.-F."/>
            <person name="Straub M.-L."/>
            <person name="Suleau A."/>
            <person name="Swennen D."/>
            <person name="Tekaia F."/>
            <person name="Wesolowski-Louvel M."/>
            <person name="Westhof E."/>
            <person name="Wirth B."/>
            <person name="Zeniou-Meyer M."/>
            <person name="Zivanovic Y."/>
            <person name="Bolotin-Fukuhara M."/>
            <person name="Thierry A."/>
            <person name="Bouchier C."/>
            <person name="Caudron B."/>
            <person name="Scarpelli C."/>
            <person name="Gaillardin C."/>
            <person name="Weissenbach J."/>
            <person name="Wincker P."/>
            <person name="Souciet J.-L."/>
        </authorList>
    </citation>
    <scope>NUCLEOTIDE SEQUENCE [LARGE SCALE GENOMIC DNA]</scope>
    <source>
        <strain>ATCC 8585 / CBS 2359 / DSM 70799 / NBRC 1267 / NRRL Y-1140 / WM37</strain>
    </source>
</reference>
<proteinExistence type="inferred from homology"/>